<organism>
    <name type="scientific">Buchnera aphidicola subsp. Baizongia pistaciae (strain Bp)</name>
    <dbReference type="NCBI Taxonomy" id="224915"/>
    <lineage>
        <taxon>Bacteria</taxon>
        <taxon>Pseudomonadati</taxon>
        <taxon>Pseudomonadota</taxon>
        <taxon>Gammaproteobacteria</taxon>
        <taxon>Enterobacterales</taxon>
        <taxon>Erwiniaceae</taxon>
        <taxon>Buchnera</taxon>
    </lineage>
</organism>
<name>RL32_BUCBP</name>
<feature type="initiator methionine" description="Removed" evidence="1">
    <location>
        <position position="1"/>
    </location>
</feature>
<feature type="chain" id="PRO_0000172321" description="Large ribosomal subunit protein bL32">
    <location>
        <begin position="2"/>
        <end position="54"/>
    </location>
</feature>
<gene>
    <name evidence="2" type="primary">rpmF</name>
    <name type="ordered locus">bbp_319</name>
</gene>
<proteinExistence type="inferred from homology"/>
<reference key="1">
    <citation type="journal article" date="2003" name="Proc. Natl. Acad. Sci. U.S.A.">
        <title>Reductive genome evolution in Buchnera aphidicola.</title>
        <authorList>
            <person name="van Ham R.C.H.J."/>
            <person name="Kamerbeek J."/>
            <person name="Palacios C."/>
            <person name="Rausell C."/>
            <person name="Abascal F."/>
            <person name="Bastolla U."/>
            <person name="Fernandez J.M."/>
            <person name="Jimenez L."/>
            <person name="Postigo M."/>
            <person name="Silva F.J."/>
            <person name="Tamames J."/>
            <person name="Viguera E."/>
            <person name="Latorre A."/>
            <person name="Valencia A."/>
            <person name="Moran F."/>
            <person name="Moya A."/>
        </authorList>
    </citation>
    <scope>NUCLEOTIDE SEQUENCE [LARGE SCALE GENOMIC DNA]</scope>
    <source>
        <strain>Bp</strain>
    </source>
</reference>
<keyword id="KW-1185">Reference proteome</keyword>
<keyword id="KW-0687">Ribonucleoprotein</keyword>
<keyword id="KW-0689">Ribosomal protein</keyword>
<accession>Q89AH1</accession>
<sequence length="54" mass="6358">MAVQKNKPTRSKRGMRRSHDYLKIPLLSKDKLSGEIHIRHHITKNGYYKGKKVI</sequence>
<protein>
    <recommendedName>
        <fullName evidence="2">Large ribosomal subunit protein bL32</fullName>
    </recommendedName>
    <alternativeName>
        <fullName evidence="3">50S ribosomal protein L32</fullName>
    </alternativeName>
</protein>
<comment type="similarity">
    <text evidence="2">Belongs to the bacterial ribosomal protein bL32 family.</text>
</comment>
<dbReference type="EMBL" id="AE016826">
    <property type="protein sequence ID" value="AAO27041.1"/>
    <property type="molecule type" value="Genomic_DNA"/>
</dbReference>
<dbReference type="RefSeq" id="WP_011091442.1">
    <property type="nucleotide sequence ID" value="NC_004545.1"/>
</dbReference>
<dbReference type="SMR" id="Q89AH1"/>
<dbReference type="STRING" id="224915.bbp_319"/>
<dbReference type="KEGG" id="bab:bbp_319"/>
<dbReference type="eggNOG" id="COG0333">
    <property type="taxonomic scope" value="Bacteria"/>
</dbReference>
<dbReference type="HOGENOM" id="CLU_129084_2_1_6"/>
<dbReference type="OrthoDB" id="9801927at2"/>
<dbReference type="Proteomes" id="UP000000601">
    <property type="component" value="Chromosome"/>
</dbReference>
<dbReference type="GO" id="GO:0015934">
    <property type="term" value="C:large ribosomal subunit"/>
    <property type="evidence" value="ECO:0007669"/>
    <property type="project" value="InterPro"/>
</dbReference>
<dbReference type="GO" id="GO:0003735">
    <property type="term" value="F:structural constituent of ribosome"/>
    <property type="evidence" value="ECO:0007669"/>
    <property type="project" value="InterPro"/>
</dbReference>
<dbReference type="GO" id="GO:0006412">
    <property type="term" value="P:translation"/>
    <property type="evidence" value="ECO:0007669"/>
    <property type="project" value="UniProtKB-UniRule"/>
</dbReference>
<dbReference type="HAMAP" id="MF_00340">
    <property type="entry name" value="Ribosomal_bL32"/>
    <property type="match status" value="1"/>
</dbReference>
<dbReference type="InterPro" id="IPR002677">
    <property type="entry name" value="Ribosomal_bL32"/>
</dbReference>
<dbReference type="InterPro" id="IPR044957">
    <property type="entry name" value="Ribosomal_bL32_bact"/>
</dbReference>
<dbReference type="InterPro" id="IPR011332">
    <property type="entry name" value="Ribosomal_zn-bd"/>
</dbReference>
<dbReference type="NCBIfam" id="TIGR01031">
    <property type="entry name" value="rpmF_bact"/>
    <property type="match status" value="1"/>
</dbReference>
<dbReference type="PANTHER" id="PTHR35534">
    <property type="entry name" value="50S RIBOSOMAL PROTEIN L32"/>
    <property type="match status" value="1"/>
</dbReference>
<dbReference type="PANTHER" id="PTHR35534:SF1">
    <property type="entry name" value="LARGE RIBOSOMAL SUBUNIT PROTEIN BL32"/>
    <property type="match status" value="1"/>
</dbReference>
<dbReference type="Pfam" id="PF01783">
    <property type="entry name" value="Ribosomal_L32p"/>
    <property type="match status" value="1"/>
</dbReference>
<dbReference type="SUPFAM" id="SSF57829">
    <property type="entry name" value="Zn-binding ribosomal proteins"/>
    <property type="match status" value="1"/>
</dbReference>
<evidence type="ECO:0000250" key="1"/>
<evidence type="ECO:0000255" key="2">
    <source>
        <dbReference type="HAMAP-Rule" id="MF_00340"/>
    </source>
</evidence>
<evidence type="ECO:0000305" key="3"/>